<accession>P31192</accession>
<evidence type="ECO:0000250" key="1"/>
<evidence type="ECO:0000305" key="2"/>
<reference key="1">
    <citation type="journal article" date="1994" name="Mol. Phylogenet. Evol.">
        <title>Molecular phylogeny of families related to Celastrales based on rbcL 5' flanking sequences.</title>
        <authorList>
            <person name="Savolainen V."/>
            <person name="Manen J.F."/>
            <person name="Douzery E.J.P."/>
            <person name="Spichiger R."/>
        </authorList>
    </citation>
    <scope>NUCLEOTIDE SEQUENCE [GENOMIC DNA]</scope>
</reference>
<organism>
    <name type="scientific">Ilex ciliospinosa</name>
    <name type="common">Sichuan holly</name>
    <dbReference type="NCBI Taxonomy" id="4299"/>
    <lineage>
        <taxon>Eukaryota</taxon>
        <taxon>Viridiplantae</taxon>
        <taxon>Streptophyta</taxon>
        <taxon>Embryophyta</taxon>
        <taxon>Tracheophyta</taxon>
        <taxon>Spermatophyta</taxon>
        <taxon>Magnoliopsida</taxon>
        <taxon>eudicotyledons</taxon>
        <taxon>Gunneridae</taxon>
        <taxon>Pentapetalae</taxon>
        <taxon>asterids</taxon>
        <taxon>campanulids</taxon>
        <taxon>Aquifoliales</taxon>
        <taxon>Aquifoliaceae</taxon>
        <taxon>Ilex</taxon>
    </lineage>
</organism>
<geneLocation type="chloroplast"/>
<proteinExistence type="inferred from homology"/>
<feature type="propeptide" id="PRO_0000031261" evidence="1">
    <location>
        <begin position="1"/>
        <end position="2"/>
    </location>
</feature>
<feature type="chain" id="PRO_0000031262" description="Ribulose bisphosphate carboxylase large chain">
    <location>
        <begin position="3"/>
        <end position="54" status="greater than"/>
    </location>
</feature>
<feature type="modified residue" description="N-acetylproline" evidence="1">
    <location>
        <position position="3"/>
    </location>
</feature>
<feature type="modified residue" description="N6,N6,N6-trimethyllysine" evidence="1">
    <location>
        <position position="14"/>
    </location>
</feature>
<feature type="non-terminal residue">
    <location>
        <position position="54"/>
    </location>
</feature>
<sequence>MSPQTETKASVGFKAGVKDYKLNYYTPDYVTKDTDILAAFRVSPQPGVPPEEAG</sequence>
<keyword id="KW-0007">Acetylation</keyword>
<keyword id="KW-0113">Calvin cycle</keyword>
<keyword id="KW-0120">Carbon dioxide fixation</keyword>
<keyword id="KW-0150">Chloroplast</keyword>
<keyword id="KW-0456">Lyase</keyword>
<keyword id="KW-0488">Methylation</keyword>
<keyword id="KW-0503">Monooxygenase</keyword>
<keyword id="KW-0560">Oxidoreductase</keyword>
<keyword id="KW-0601">Photorespiration</keyword>
<keyword id="KW-0602">Photosynthesis</keyword>
<keyword id="KW-0934">Plastid</keyword>
<comment type="function">
    <text evidence="1">RuBisCO catalyzes two reactions: the carboxylation of D-ribulose 1,5-bisphosphate, the primary event in carbon dioxide fixation, as well as the oxidative fragmentation of the pentose substrate in the photorespiration process. Both reactions occur simultaneously and in competition at the same active site (By similarity).</text>
</comment>
<comment type="catalytic activity">
    <reaction>
        <text>2 (2R)-3-phosphoglycerate + 2 H(+) = D-ribulose 1,5-bisphosphate + CO2 + H2O</text>
        <dbReference type="Rhea" id="RHEA:23124"/>
        <dbReference type="ChEBI" id="CHEBI:15377"/>
        <dbReference type="ChEBI" id="CHEBI:15378"/>
        <dbReference type="ChEBI" id="CHEBI:16526"/>
        <dbReference type="ChEBI" id="CHEBI:57870"/>
        <dbReference type="ChEBI" id="CHEBI:58272"/>
        <dbReference type="EC" id="4.1.1.39"/>
    </reaction>
</comment>
<comment type="catalytic activity">
    <reaction>
        <text>D-ribulose 1,5-bisphosphate + O2 = 2-phosphoglycolate + (2R)-3-phosphoglycerate + 2 H(+)</text>
        <dbReference type="Rhea" id="RHEA:36631"/>
        <dbReference type="ChEBI" id="CHEBI:15378"/>
        <dbReference type="ChEBI" id="CHEBI:15379"/>
        <dbReference type="ChEBI" id="CHEBI:57870"/>
        <dbReference type="ChEBI" id="CHEBI:58033"/>
        <dbReference type="ChEBI" id="CHEBI:58272"/>
    </reaction>
</comment>
<comment type="subunit">
    <text evidence="1">Heterohexadecamer of 8 large chains and 8 small chains.</text>
</comment>
<comment type="subcellular location">
    <subcellularLocation>
        <location>Plastid</location>
        <location>Chloroplast</location>
    </subcellularLocation>
</comment>
<comment type="miscellaneous">
    <text evidence="1">The basic functional RuBisCO is composed of a large chain homodimer in a 'head-to-tail' conformation. In form I RuBisCO this homodimer is arranged in a barrel-like tetramer with the small subunits forming a tetrameric 'cap' on each end of the 'barrel' (By similarity).</text>
</comment>
<comment type="similarity">
    <text evidence="2">Belongs to the RuBisCO large chain family. Type I subfamily.</text>
</comment>
<gene>
    <name type="primary">rbcL</name>
</gene>
<dbReference type="EC" id="4.1.1.39"/>
<dbReference type="EMBL" id="X69742">
    <property type="protein sequence ID" value="CAA49397.1"/>
    <property type="molecule type" value="Genomic_DNA"/>
</dbReference>
<dbReference type="PIR" id="S31528">
    <property type="entry name" value="S31528"/>
</dbReference>
<dbReference type="SMR" id="P31192"/>
<dbReference type="GO" id="GO:0009507">
    <property type="term" value="C:chloroplast"/>
    <property type="evidence" value="ECO:0007669"/>
    <property type="project" value="UniProtKB-SubCell"/>
</dbReference>
<dbReference type="GO" id="GO:0004497">
    <property type="term" value="F:monooxygenase activity"/>
    <property type="evidence" value="ECO:0007669"/>
    <property type="project" value="UniProtKB-KW"/>
</dbReference>
<dbReference type="GO" id="GO:0016984">
    <property type="term" value="F:ribulose-bisphosphate carboxylase activity"/>
    <property type="evidence" value="ECO:0007669"/>
    <property type="project" value="UniProtKB-EC"/>
</dbReference>
<dbReference type="GO" id="GO:0009853">
    <property type="term" value="P:photorespiration"/>
    <property type="evidence" value="ECO:0007669"/>
    <property type="project" value="UniProtKB-KW"/>
</dbReference>
<dbReference type="GO" id="GO:0019253">
    <property type="term" value="P:reductive pentose-phosphate cycle"/>
    <property type="evidence" value="ECO:0007669"/>
    <property type="project" value="UniProtKB-KW"/>
</dbReference>
<dbReference type="Gene3D" id="3.30.70.150">
    <property type="entry name" value="RuBisCO large subunit, N-terminal domain"/>
    <property type="match status" value="1"/>
</dbReference>
<dbReference type="InterPro" id="IPR033966">
    <property type="entry name" value="RuBisCO"/>
</dbReference>
<dbReference type="InterPro" id="IPR017443">
    <property type="entry name" value="RuBisCO_lsu_fd_N"/>
</dbReference>
<dbReference type="InterPro" id="IPR036422">
    <property type="entry name" value="RuBisCO_lsu_N_sf"/>
</dbReference>
<dbReference type="PANTHER" id="PTHR42704">
    <property type="entry name" value="RIBULOSE BISPHOSPHATE CARBOXYLASE"/>
    <property type="match status" value="1"/>
</dbReference>
<dbReference type="PANTHER" id="PTHR42704:SF15">
    <property type="entry name" value="RIBULOSE BISPHOSPHATE CARBOXYLASE LARGE CHAIN"/>
    <property type="match status" value="1"/>
</dbReference>
<dbReference type="Pfam" id="PF02788">
    <property type="entry name" value="RuBisCO_large_N"/>
    <property type="match status" value="1"/>
</dbReference>
<dbReference type="SUPFAM" id="SSF54966">
    <property type="entry name" value="RuBisCO, large subunit, small (N-terminal) domain"/>
    <property type="match status" value="1"/>
</dbReference>
<name>RBL_ILECI</name>
<protein>
    <recommendedName>
        <fullName>Ribulose bisphosphate carboxylase large chain</fullName>
        <shortName>RuBisCO large subunit</shortName>
        <ecNumber>4.1.1.39</ecNumber>
    </recommendedName>
</protein>